<name>NOP13_YEAST</name>
<evidence type="ECO:0000255" key="1">
    <source>
        <dbReference type="PROSITE-ProRule" id="PRU00176"/>
    </source>
</evidence>
<evidence type="ECO:0000256" key="2">
    <source>
        <dbReference type="SAM" id="MobiDB-lite"/>
    </source>
</evidence>
<evidence type="ECO:0000269" key="3">
    <source>
    </source>
</evidence>
<evidence type="ECO:0000269" key="4">
    <source>
    </source>
</evidence>
<evidence type="ECO:0000269" key="5">
    <source>
    </source>
</evidence>
<evidence type="ECO:0000305" key="6"/>
<evidence type="ECO:0007744" key="7">
    <source>
    </source>
</evidence>
<evidence type="ECO:0007744" key="8">
    <source>
    </source>
</evidence>
<evidence type="ECO:0007744" key="9">
    <source>
    </source>
</evidence>
<evidence type="ECO:0007744" key="10">
    <source>
    </source>
</evidence>
<reference key="1">
    <citation type="journal article" date="1997" name="Nature">
        <title>The nucleotide sequence of Saccharomyces cerevisiae chromosome XIV and its evolutionary implications.</title>
        <authorList>
            <person name="Philippsen P."/>
            <person name="Kleine K."/>
            <person name="Poehlmann R."/>
            <person name="Duesterhoeft A."/>
            <person name="Hamberg K."/>
            <person name="Hegemann J.H."/>
            <person name="Obermaier B."/>
            <person name="Urrestarazu L.A."/>
            <person name="Aert R."/>
            <person name="Albermann K."/>
            <person name="Altmann R."/>
            <person name="Andre B."/>
            <person name="Baladron V."/>
            <person name="Ballesta J.P.G."/>
            <person name="Becam A.-M."/>
            <person name="Beinhauer J.D."/>
            <person name="Boskovic J."/>
            <person name="Buitrago M.J."/>
            <person name="Bussereau F."/>
            <person name="Coster F."/>
            <person name="Crouzet M."/>
            <person name="D'Angelo M."/>
            <person name="Dal Pero F."/>
            <person name="De Antoni A."/>
            <person name="del Rey F."/>
            <person name="Doignon F."/>
            <person name="Domdey H."/>
            <person name="Dubois E."/>
            <person name="Fiedler T.A."/>
            <person name="Fleig U."/>
            <person name="Floeth M."/>
            <person name="Fritz C."/>
            <person name="Gaillardin C."/>
            <person name="Garcia-Cantalejo J.M."/>
            <person name="Glansdorff N."/>
            <person name="Goffeau A."/>
            <person name="Gueldener U."/>
            <person name="Herbert C.J."/>
            <person name="Heumann K."/>
            <person name="Heuss-Neitzel D."/>
            <person name="Hilbert H."/>
            <person name="Hinni K."/>
            <person name="Iraqui Houssaini I."/>
            <person name="Jacquet M."/>
            <person name="Jimenez A."/>
            <person name="Jonniaux J.-L."/>
            <person name="Karpfinger-Hartl L."/>
            <person name="Lanfranchi G."/>
            <person name="Lepingle A."/>
            <person name="Levesque H."/>
            <person name="Lyck R."/>
            <person name="Maftahi M."/>
            <person name="Mallet L."/>
            <person name="Maurer C.T.C."/>
            <person name="Messenguy F."/>
            <person name="Mewes H.-W."/>
            <person name="Moestl D."/>
            <person name="Nasr F."/>
            <person name="Nicaud J.-M."/>
            <person name="Niedenthal R.K."/>
            <person name="Pandolfo D."/>
            <person name="Pierard A."/>
            <person name="Piravandi E."/>
            <person name="Planta R.J."/>
            <person name="Pohl T.M."/>
            <person name="Purnelle B."/>
            <person name="Rebischung C."/>
            <person name="Remacha M.A."/>
            <person name="Revuelta J.L."/>
            <person name="Rinke M."/>
            <person name="Saiz J.E."/>
            <person name="Sartorello F."/>
            <person name="Scherens B."/>
            <person name="Sen-Gupta M."/>
            <person name="Soler-Mira A."/>
            <person name="Urbanus J.H.M."/>
            <person name="Valle G."/>
            <person name="Van Dyck L."/>
            <person name="Verhasselt P."/>
            <person name="Vierendeels F."/>
            <person name="Vissers S."/>
            <person name="Voet M."/>
            <person name="Volckaert G."/>
            <person name="Wach A."/>
            <person name="Wambutt R."/>
            <person name="Wedler H."/>
            <person name="Zollner A."/>
            <person name="Hani J."/>
        </authorList>
    </citation>
    <scope>NUCLEOTIDE SEQUENCE [LARGE SCALE GENOMIC DNA]</scope>
    <source>
        <strain>ATCC 204508 / S288c</strain>
    </source>
</reference>
<reference key="2">
    <citation type="journal article" date="2014" name="G3 (Bethesda)">
        <title>The reference genome sequence of Saccharomyces cerevisiae: Then and now.</title>
        <authorList>
            <person name="Engel S.R."/>
            <person name="Dietrich F.S."/>
            <person name="Fisk D.G."/>
            <person name="Binkley G."/>
            <person name="Balakrishnan R."/>
            <person name="Costanzo M.C."/>
            <person name="Dwight S.S."/>
            <person name="Hitz B.C."/>
            <person name="Karra K."/>
            <person name="Nash R.S."/>
            <person name="Weng S."/>
            <person name="Wong E.D."/>
            <person name="Lloyd P."/>
            <person name="Skrzypek M.S."/>
            <person name="Miyasato S.R."/>
            <person name="Simison M."/>
            <person name="Cherry J.M."/>
        </authorList>
    </citation>
    <scope>GENOME REANNOTATION</scope>
    <scope>SEQUENCE REVISION TO 296</scope>
    <source>
        <strain>ATCC 204508 / S288c</strain>
    </source>
</reference>
<reference key="3">
    <citation type="journal article" date="2001" name="Nucleic Acids Res.">
        <title>Nucleolar protein Nop12p participates in synthesis of 25S rRNA in Saccharomyces cerevisiae.</title>
        <authorList>
            <person name="Wu K."/>
            <person name="Wu P."/>
            <person name="Aris J.P."/>
        </authorList>
    </citation>
    <scope>SUBCELLULAR LOCATION</scope>
</reference>
<reference key="4">
    <citation type="journal article" date="2003" name="Nature">
        <title>Global analysis of protein localization in budding yeast.</title>
        <authorList>
            <person name="Huh W.-K."/>
            <person name="Falvo J.V."/>
            <person name="Gerke L.C."/>
            <person name="Carroll A.S."/>
            <person name="Howson R.W."/>
            <person name="Weissman J.S."/>
            <person name="O'Shea E.K."/>
        </authorList>
    </citation>
    <scope>SUBCELLULAR LOCATION [LARGE SCALE ANALYSIS]</scope>
</reference>
<reference key="5">
    <citation type="journal article" date="2003" name="Nature">
        <title>Global analysis of protein expression in yeast.</title>
        <authorList>
            <person name="Ghaemmaghami S."/>
            <person name="Huh W.-K."/>
            <person name="Bower K."/>
            <person name="Howson R.W."/>
            <person name="Belle A."/>
            <person name="Dephoure N."/>
            <person name="O'Shea E.K."/>
            <person name="Weissman J.S."/>
        </authorList>
    </citation>
    <scope>LEVEL OF PROTEIN EXPRESSION [LARGE SCALE ANALYSIS]</scope>
</reference>
<reference key="6">
    <citation type="journal article" date="2005" name="Mol. Cell. Proteomics">
        <title>Quantitative phosphoproteomics applied to the yeast pheromone signaling pathway.</title>
        <authorList>
            <person name="Gruhler A."/>
            <person name="Olsen J.V."/>
            <person name="Mohammed S."/>
            <person name="Mortensen P."/>
            <person name="Faergeman N.J."/>
            <person name="Mann M."/>
            <person name="Jensen O.N."/>
        </authorList>
    </citation>
    <scope>ACETYLATION [LARGE SCALE ANALYSIS] AT SER-2</scope>
    <scope>PHOSPHORYLATION [LARGE SCALE ANALYSIS] AT SER-2</scope>
    <scope>CLEAVAGE OF INITIATOR METHIONINE [LARGE SCALE ANALYSIS]</scope>
    <scope>IDENTIFICATION BY MASS SPECTROMETRY [LARGE SCALE ANALYSIS]</scope>
    <source>
        <strain>YAL6B</strain>
    </source>
</reference>
<reference key="7">
    <citation type="journal article" date="2007" name="J. Proteome Res.">
        <title>Large-scale phosphorylation analysis of alpha-factor-arrested Saccharomyces cerevisiae.</title>
        <authorList>
            <person name="Li X."/>
            <person name="Gerber S.A."/>
            <person name="Rudner A.D."/>
            <person name="Beausoleil S.A."/>
            <person name="Haas W."/>
            <person name="Villen J."/>
            <person name="Elias J.E."/>
            <person name="Gygi S.P."/>
        </authorList>
    </citation>
    <scope>PHOSPHORYLATION [LARGE SCALE ANALYSIS] AT THR-105</scope>
    <scope>IDENTIFICATION BY MASS SPECTROMETRY [LARGE SCALE ANALYSIS]</scope>
    <source>
        <strain>ADR376</strain>
    </source>
</reference>
<reference key="8">
    <citation type="journal article" date="2008" name="Mol. Cell. Proteomics">
        <title>A multidimensional chromatography technology for in-depth phosphoproteome analysis.</title>
        <authorList>
            <person name="Albuquerque C.P."/>
            <person name="Smolka M.B."/>
            <person name="Payne S.H."/>
            <person name="Bafna V."/>
            <person name="Eng J."/>
            <person name="Zhou H."/>
        </authorList>
    </citation>
    <scope>PHOSPHORYLATION [LARGE SCALE ANALYSIS] AT SER-2</scope>
    <scope>IDENTIFICATION BY MASS SPECTROMETRY [LARGE SCALE ANALYSIS]</scope>
</reference>
<reference key="9">
    <citation type="journal article" date="2009" name="Science">
        <title>Global analysis of Cdk1 substrate phosphorylation sites provides insights into evolution.</title>
        <authorList>
            <person name="Holt L.J."/>
            <person name="Tuch B.B."/>
            <person name="Villen J."/>
            <person name="Johnson A.D."/>
            <person name="Gygi S.P."/>
            <person name="Morgan D.O."/>
        </authorList>
    </citation>
    <scope>PHOSPHORYLATION [LARGE SCALE ANALYSIS] AT THR-105 AND SER-335</scope>
    <scope>IDENTIFICATION BY MASS SPECTROMETRY [LARGE SCALE ANALYSIS]</scope>
</reference>
<sequence length="403" mass="45609">MSETELSKEDAVTKKDNEEQVKKALLDPTKKRKAEDEIEIDLKSSIPLSKKQKRLLRRGKVTLEELNAKYNIDPKSIEEYKEDAEKKKSGASEKDAQGEESTINTPTGDESGEVVKKKKKDENKYGVWIGNLSFDTTKDDLVRFFIAKTKDNEDEKSRVTEQDITRLSMPRVAAKNSNAMKNKGFCYMFFKNVEQMKAVLELSESHLNGRNMLIKDSENYSGRPDKDDLVAMSKNPPSRILFVGNLSFDVTDDLLRKHFQHCGDIVKIRMATFEDSGKCKGFAFIDFKNEEGSTNALKDKSCRKIAGRPLRMEYGEDRSKRQVRKKVENVSRNNSSSFDISNNKGYDRAGQDNGSKPEYKRSNANRRPPVDSNNRTKSSVALATAQRGSAAIVPSQGKKVKFD</sequence>
<keyword id="KW-0007">Acetylation</keyword>
<keyword id="KW-0539">Nucleus</keyword>
<keyword id="KW-0597">Phosphoprotein</keyword>
<keyword id="KW-1185">Reference proteome</keyword>
<keyword id="KW-0677">Repeat</keyword>
<keyword id="KW-0694">RNA-binding</keyword>
<accession>P53883</accession>
<accession>D6W110</accession>
<comment type="interaction">
    <interactant intactId="EBI-29032">
        <id>P53883</id>
    </interactant>
    <interactant intactId="EBI-12122">
        <id>P37838</id>
        <label>NOP4</label>
    </interactant>
    <organismsDiffer>false</organismsDiffer>
    <experiments>3</experiments>
</comment>
<comment type="subcellular location">
    <subcellularLocation>
        <location evidence="3 4">Nucleus</location>
        <location evidence="3 4">Nucleolus</location>
    </subcellularLocation>
    <text>Also found in nucleoplasm.</text>
</comment>
<comment type="miscellaneous">
    <text evidence="5">Present with 3830 molecules/cell in log phase SD medium.</text>
</comment>
<dbReference type="EMBL" id="Z71451">
    <property type="protein sequence ID" value="CAA96066.1"/>
    <property type="molecule type" value="Genomic_DNA"/>
</dbReference>
<dbReference type="EMBL" id="BK006947">
    <property type="protein sequence ID" value="DAA10376.2"/>
    <property type="molecule type" value="Genomic_DNA"/>
</dbReference>
<dbReference type="PIR" id="S63130">
    <property type="entry name" value="S63130"/>
</dbReference>
<dbReference type="RefSeq" id="NP_014224.2">
    <property type="nucleotide sequence ID" value="NM_001183013.2"/>
</dbReference>
<dbReference type="SMR" id="P53883"/>
<dbReference type="BioGRID" id="35656">
    <property type="interactions" value="226"/>
</dbReference>
<dbReference type="DIP" id="DIP-4331N"/>
<dbReference type="FunCoup" id="P53883">
    <property type="interactions" value="1152"/>
</dbReference>
<dbReference type="IntAct" id="P53883">
    <property type="interactions" value="121"/>
</dbReference>
<dbReference type="MINT" id="P53883"/>
<dbReference type="STRING" id="4932.YNL175C"/>
<dbReference type="iPTMnet" id="P53883"/>
<dbReference type="PaxDb" id="4932-YNL175C"/>
<dbReference type="PeptideAtlas" id="P53883"/>
<dbReference type="EnsemblFungi" id="YNL175C_mRNA">
    <property type="protein sequence ID" value="YNL175C"/>
    <property type="gene ID" value="YNL175C"/>
</dbReference>
<dbReference type="GeneID" id="855547"/>
<dbReference type="KEGG" id="sce:YNL175C"/>
<dbReference type="AGR" id="SGD:S000005119"/>
<dbReference type="SGD" id="S000005119">
    <property type="gene designation" value="NOP13"/>
</dbReference>
<dbReference type="VEuPathDB" id="FungiDB:YNL175C"/>
<dbReference type="eggNOG" id="KOG4210">
    <property type="taxonomic scope" value="Eukaryota"/>
</dbReference>
<dbReference type="HOGENOM" id="CLU_027451_0_0_1"/>
<dbReference type="InParanoid" id="P53883"/>
<dbReference type="OMA" id="RVWVNQL"/>
<dbReference type="OrthoDB" id="1875751at2759"/>
<dbReference type="BioCyc" id="YEAST:G3O-33187-MONOMER"/>
<dbReference type="Reactome" id="R-SCE-156827">
    <property type="pathway name" value="L13a-mediated translational silencing of Ceruloplasmin expression"/>
</dbReference>
<dbReference type="Reactome" id="R-SCE-166208">
    <property type="pathway name" value="mTORC1-mediated signalling"/>
</dbReference>
<dbReference type="Reactome" id="R-SCE-429947">
    <property type="pathway name" value="Deadenylation of mRNA"/>
</dbReference>
<dbReference type="Reactome" id="R-SCE-72649">
    <property type="pathway name" value="Translation initiation complex formation"/>
</dbReference>
<dbReference type="Reactome" id="R-SCE-72662">
    <property type="pathway name" value="Activation of the mRNA upon binding of the cap-binding complex and eIFs, and subsequent binding to 43S"/>
</dbReference>
<dbReference type="Reactome" id="R-SCE-72702">
    <property type="pathway name" value="Ribosomal scanning and start codon recognition"/>
</dbReference>
<dbReference type="BioGRID-ORCS" id="855547">
    <property type="hits" value="1 hit in 10 CRISPR screens"/>
</dbReference>
<dbReference type="CD-CODE" id="BDAE0F88">
    <property type="entry name" value="Nucleolus"/>
</dbReference>
<dbReference type="PRO" id="PR:P53883"/>
<dbReference type="Proteomes" id="UP000002311">
    <property type="component" value="Chromosome XIV"/>
</dbReference>
<dbReference type="RNAct" id="P53883">
    <property type="molecule type" value="protein"/>
</dbReference>
<dbReference type="GO" id="GO:0005730">
    <property type="term" value="C:nucleolus"/>
    <property type="evidence" value="ECO:0000314"/>
    <property type="project" value="SGD"/>
</dbReference>
<dbReference type="GO" id="GO:0005634">
    <property type="term" value="C:nucleus"/>
    <property type="evidence" value="ECO:0007005"/>
    <property type="project" value="SGD"/>
</dbReference>
<dbReference type="GO" id="GO:0030684">
    <property type="term" value="C:preribosome"/>
    <property type="evidence" value="ECO:0000314"/>
    <property type="project" value="SGD"/>
</dbReference>
<dbReference type="GO" id="GO:0043024">
    <property type="term" value="F:ribosomal small subunit binding"/>
    <property type="evidence" value="ECO:0000318"/>
    <property type="project" value="GO_Central"/>
</dbReference>
<dbReference type="GO" id="GO:0003723">
    <property type="term" value="F:RNA binding"/>
    <property type="evidence" value="ECO:0000250"/>
    <property type="project" value="SGD"/>
</dbReference>
<dbReference type="GO" id="GO:0033592">
    <property type="term" value="F:RNA strand annealing activity"/>
    <property type="evidence" value="ECO:0000318"/>
    <property type="project" value="GO_Central"/>
</dbReference>
<dbReference type="GO" id="GO:0034057">
    <property type="term" value="F:RNA strand-exchange activity"/>
    <property type="evidence" value="ECO:0000318"/>
    <property type="project" value="GO_Central"/>
</dbReference>
<dbReference type="GO" id="GO:0097010">
    <property type="term" value="P:eukaryotic translation initiation factor 4F complex assembly"/>
    <property type="evidence" value="ECO:0000318"/>
    <property type="project" value="GO_Central"/>
</dbReference>
<dbReference type="GO" id="GO:0001731">
    <property type="term" value="P:formation of translation preinitiation complex"/>
    <property type="evidence" value="ECO:0000318"/>
    <property type="project" value="GO_Central"/>
</dbReference>
<dbReference type="CDD" id="cd12396">
    <property type="entry name" value="RRM1_Nop13p_fungi"/>
    <property type="match status" value="1"/>
</dbReference>
<dbReference type="CDD" id="cd12397">
    <property type="entry name" value="RRM2_Nop13p_fungi"/>
    <property type="match status" value="1"/>
</dbReference>
<dbReference type="FunFam" id="3.30.70.330:FF:000863">
    <property type="entry name" value="Nucleolar protein"/>
    <property type="match status" value="1"/>
</dbReference>
<dbReference type="FunFam" id="3.30.70.330:FF:000594">
    <property type="entry name" value="RNA binding protein Rnp24"/>
    <property type="match status" value="1"/>
</dbReference>
<dbReference type="Gene3D" id="3.30.70.330">
    <property type="match status" value="2"/>
</dbReference>
<dbReference type="InterPro" id="IPR034225">
    <property type="entry name" value="Nop13/Rnp24_RRM1"/>
</dbReference>
<dbReference type="InterPro" id="IPR034226">
    <property type="entry name" value="Nop13/Rnp24_RRM2"/>
</dbReference>
<dbReference type="InterPro" id="IPR012677">
    <property type="entry name" value="Nucleotide-bd_a/b_plait_sf"/>
</dbReference>
<dbReference type="InterPro" id="IPR035979">
    <property type="entry name" value="RBD_domain_sf"/>
</dbReference>
<dbReference type="InterPro" id="IPR000504">
    <property type="entry name" value="RRM_dom"/>
</dbReference>
<dbReference type="PANTHER" id="PTHR23236">
    <property type="entry name" value="EUKARYOTIC TRANSLATION INITIATION FACTOR 4B/4H"/>
    <property type="match status" value="1"/>
</dbReference>
<dbReference type="PANTHER" id="PTHR23236:SF95">
    <property type="entry name" value="NUCLEOLAR PROTEIN 13"/>
    <property type="match status" value="1"/>
</dbReference>
<dbReference type="Pfam" id="PF00076">
    <property type="entry name" value="RRM_1"/>
    <property type="match status" value="1"/>
</dbReference>
<dbReference type="SMART" id="SM00360">
    <property type="entry name" value="RRM"/>
    <property type="match status" value="2"/>
</dbReference>
<dbReference type="SUPFAM" id="SSF54928">
    <property type="entry name" value="RNA-binding domain, RBD"/>
    <property type="match status" value="2"/>
</dbReference>
<dbReference type="PROSITE" id="PS50102">
    <property type="entry name" value="RRM"/>
    <property type="match status" value="2"/>
</dbReference>
<protein>
    <recommendedName>
        <fullName>Nucleolar protein 13</fullName>
    </recommendedName>
</protein>
<organism>
    <name type="scientific">Saccharomyces cerevisiae (strain ATCC 204508 / S288c)</name>
    <name type="common">Baker's yeast</name>
    <dbReference type="NCBI Taxonomy" id="559292"/>
    <lineage>
        <taxon>Eukaryota</taxon>
        <taxon>Fungi</taxon>
        <taxon>Dikarya</taxon>
        <taxon>Ascomycota</taxon>
        <taxon>Saccharomycotina</taxon>
        <taxon>Saccharomycetes</taxon>
        <taxon>Saccharomycetales</taxon>
        <taxon>Saccharomycetaceae</taxon>
        <taxon>Saccharomyces</taxon>
    </lineage>
</organism>
<feature type="initiator methionine" description="Removed" evidence="7">
    <location>
        <position position="1"/>
    </location>
</feature>
<feature type="chain" id="PRO_0000082036" description="Nucleolar protein 13">
    <location>
        <begin position="2"/>
        <end position="403"/>
    </location>
</feature>
<feature type="domain" description="RRM 1" evidence="1">
    <location>
        <begin position="125"/>
        <end position="219"/>
    </location>
</feature>
<feature type="domain" description="RRM 2" evidence="1">
    <location>
        <begin position="239"/>
        <end position="317"/>
    </location>
</feature>
<feature type="region of interest" description="Disordered" evidence="2">
    <location>
        <begin position="1"/>
        <end position="43"/>
    </location>
</feature>
<feature type="region of interest" description="Disordered" evidence="2">
    <location>
        <begin position="72"/>
        <end position="116"/>
    </location>
</feature>
<feature type="region of interest" description="Disordered" evidence="2">
    <location>
        <begin position="313"/>
        <end position="403"/>
    </location>
</feature>
<feature type="compositionally biased region" description="Basic and acidic residues" evidence="2">
    <location>
        <begin position="1"/>
        <end position="35"/>
    </location>
</feature>
<feature type="compositionally biased region" description="Basic and acidic residues" evidence="2">
    <location>
        <begin position="75"/>
        <end position="97"/>
    </location>
</feature>
<feature type="compositionally biased region" description="Polar residues" evidence="2">
    <location>
        <begin position="99"/>
        <end position="108"/>
    </location>
</feature>
<feature type="compositionally biased region" description="Basic and acidic residues" evidence="2">
    <location>
        <begin position="313"/>
        <end position="329"/>
    </location>
</feature>
<feature type="compositionally biased region" description="Polar residues" evidence="2">
    <location>
        <begin position="330"/>
        <end position="344"/>
    </location>
</feature>
<feature type="compositionally biased region" description="Basic and acidic residues" evidence="2">
    <location>
        <begin position="345"/>
        <end position="361"/>
    </location>
</feature>
<feature type="compositionally biased region" description="Polar residues" evidence="2">
    <location>
        <begin position="371"/>
        <end position="381"/>
    </location>
</feature>
<feature type="modified residue" description="N-acetylserine" evidence="7">
    <location>
        <position position="2"/>
    </location>
</feature>
<feature type="modified residue" description="Phosphoserine" evidence="7 9">
    <location>
        <position position="2"/>
    </location>
</feature>
<feature type="modified residue" description="Phosphothreonine" evidence="8 10">
    <location>
        <position position="105"/>
    </location>
</feature>
<feature type="modified residue" description="Phosphoserine" evidence="10">
    <location>
        <position position="335"/>
    </location>
</feature>
<feature type="sequence conflict" description="In Ref. 1; CAA96066." evidence="6" ref="1">
    <original>A</original>
    <variation>E</variation>
    <location>
        <position position="296"/>
    </location>
</feature>
<gene>
    <name type="primary">NOP13</name>
    <name type="ordered locus">YNL175C</name>
    <name type="ORF">N1665</name>
</gene>
<proteinExistence type="evidence at protein level"/>